<feature type="chain" id="PRO_1000191210" description="Met repressor">
    <location>
        <begin position="1"/>
        <end position="105"/>
    </location>
</feature>
<comment type="function">
    <text evidence="1">This regulatory protein, when combined with SAM (S-adenosylmethionine) represses the expression of the methionine regulon and of enzymes involved in SAM synthesis.</text>
</comment>
<comment type="subunit">
    <text evidence="1">Homodimer.</text>
</comment>
<comment type="subcellular location">
    <subcellularLocation>
        <location evidence="1">Cytoplasm</location>
    </subcellularLocation>
</comment>
<comment type="domain">
    <text>Does not bind DNA by a helix-turn-helix motif.</text>
</comment>
<comment type="similarity">
    <text evidence="1">Belongs to the MetJ family.</text>
</comment>
<keyword id="KW-0028">Amino-acid biosynthesis</keyword>
<keyword id="KW-0963">Cytoplasm</keyword>
<keyword id="KW-0238">DNA-binding</keyword>
<keyword id="KW-0486">Methionine biosynthesis</keyword>
<keyword id="KW-0678">Repressor</keyword>
<keyword id="KW-0804">Transcription</keyword>
<keyword id="KW-0805">Transcription regulation</keyword>
<proteinExistence type="inferred from homology"/>
<gene>
    <name evidence="1" type="primary">metJ</name>
    <name type="ordered locus">ECSE_4232</name>
</gene>
<evidence type="ECO:0000255" key="1">
    <source>
        <dbReference type="HAMAP-Rule" id="MF_00744"/>
    </source>
</evidence>
<reference key="1">
    <citation type="journal article" date="2008" name="DNA Res.">
        <title>Complete genome sequence and comparative analysis of the wild-type commensal Escherichia coli strain SE11 isolated from a healthy adult.</title>
        <authorList>
            <person name="Oshima K."/>
            <person name="Toh H."/>
            <person name="Ogura Y."/>
            <person name="Sasamoto H."/>
            <person name="Morita H."/>
            <person name="Park S.-H."/>
            <person name="Ooka T."/>
            <person name="Iyoda S."/>
            <person name="Taylor T.D."/>
            <person name="Hayashi T."/>
            <person name="Itoh K."/>
            <person name="Hattori M."/>
        </authorList>
    </citation>
    <scope>NUCLEOTIDE SEQUENCE [LARGE SCALE GENOMIC DNA]</scope>
    <source>
        <strain>SE11</strain>
    </source>
</reference>
<name>METJ_ECOSE</name>
<organism>
    <name type="scientific">Escherichia coli (strain SE11)</name>
    <dbReference type="NCBI Taxonomy" id="409438"/>
    <lineage>
        <taxon>Bacteria</taxon>
        <taxon>Pseudomonadati</taxon>
        <taxon>Pseudomonadota</taxon>
        <taxon>Gammaproteobacteria</taxon>
        <taxon>Enterobacterales</taxon>
        <taxon>Enterobacteriaceae</taxon>
        <taxon>Escherichia</taxon>
    </lineage>
</organism>
<sequence>MAEWSGEYISPYAEHGKKSEQVKKITVSIPLKVLKILTDERTRRQVNNLRHATNSELLCEAFLHAFTGQPLPDDADLRKERSDEIPEAAKEIMREMGINPETWEY</sequence>
<protein>
    <recommendedName>
        <fullName evidence="1">Met repressor</fullName>
    </recommendedName>
    <alternativeName>
        <fullName evidence="1">Met regulon regulatory protein MetJ</fullName>
    </alternativeName>
</protein>
<dbReference type="EMBL" id="AP009240">
    <property type="protein sequence ID" value="BAG79756.1"/>
    <property type="molecule type" value="Genomic_DNA"/>
</dbReference>
<dbReference type="RefSeq" id="WP_000852812.1">
    <property type="nucleotide sequence ID" value="NC_011415.1"/>
</dbReference>
<dbReference type="SMR" id="B6I4T6"/>
<dbReference type="GeneID" id="93777954"/>
<dbReference type="KEGG" id="ecy:ECSE_4232"/>
<dbReference type="HOGENOM" id="CLU_142318_0_0_6"/>
<dbReference type="Proteomes" id="UP000008199">
    <property type="component" value="Chromosome"/>
</dbReference>
<dbReference type="GO" id="GO:0005737">
    <property type="term" value="C:cytoplasm"/>
    <property type="evidence" value="ECO:0007669"/>
    <property type="project" value="UniProtKB-SubCell"/>
</dbReference>
<dbReference type="GO" id="GO:0003677">
    <property type="term" value="F:DNA binding"/>
    <property type="evidence" value="ECO:0007669"/>
    <property type="project" value="UniProtKB-KW"/>
</dbReference>
<dbReference type="GO" id="GO:0003700">
    <property type="term" value="F:DNA-binding transcription factor activity"/>
    <property type="evidence" value="ECO:0007669"/>
    <property type="project" value="InterPro"/>
</dbReference>
<dbReference type="GO" id="GO:0009086">
    <property type="term" value="P:methionine biosynthetic process"/>
    <property type="evidence" value="ECO:0007669"/>
    <property type="project" value="UniProtKB-UniRule"/>
</dbReference>
<dbReference type="GO" id="GO:0045892">
    <property type="term" value="P:negative regulation of DNA-templated transcription"/>
    <property type="evidence" value="ECO:0007669"/>
    <property type="project" value="UniProtKB-UniRule"/>
</dbReference>
<dbReference type="CDD" id="cd00490">
    <property type="entry name" value="Met_repressor_MetJ"/>
    <property type="match status" value="1"/>
</dbReference>
<dbReference type="FunFam" id="1.10.140.10:FF:000001">
    <property type="entry name" value="Met repressor"/>
    <property type="match status" value="1"/>
</dbReference>
<dbReference type="Gene3D" id="1.10.140.10">
    <property type="entry name" value="MET Apo-Repressor, subunit A"/>
    <property type="match status" value="1"/>
</dbReference>
<dbReference type="HAMAP" id="MF_00744">
    <property type="entry name" value="MetJ"/>
    <property type="match status" value="1"/>
</dbReference>
<dbReference type="InterPro" id="IPR002084">
    <property type="entry name" value="Met_repressor_MetJ"/>
</dbReference>
<dbReference type="InterPro" id="IPR023453">
    <property type="entry name" value="Met_repressor_MetJ_dom_sf"/>
</dbReference>
<dbReference type="InterPro" id="IPR010985">
    <property type="entry name" value="Ribbon_hlx_hlx"/>
</dbReference>
<dbReference type="NCBIfam" id="NF003622">
    <property type="entry name" value="PRK05264.1"/>
    <property type="match status" value="1"/>
</dbReference>
<dbReference type="Pfam" id="PF01340">
    <property type="entry name" value="MetJ"/>
    <property type="match status" value="1"/>
</dbReference>
<dbReference type="SUPFAM" id="SSF47598">
    <property type="entry name" value="Ribbon-helix-helix"/>
    <property type="match status" value="1"/>
</dbReference>
<accession>B6I4T6</accession>